<reference key="1">
    <citation type="journal article" date="2007" name="PLoS Genet.">
        <title>Patterns and implications of gene gain and loss in the evolution of Prochlorococcus.</title>
        <authorList>
            <person name="Kettler G.C."/>
            <person name="Martiny A.C."/>
            <person name="Huang K."/>
            <person name="Zucker J."/>
            <person name="Coleman M.L."/>
            <person name="Rodrigue S."/>
            <person name="Chen F."/>
            <person name="Lapidus A."/>
            <person name="Ferriera S."/>
            <person name="Johnson J."/>
            <person name="Steglich C."/>
            <person name="Church G.M."/>
            <person name="Richardson P."/>
            <person name="Chisholm S.W."/>
        </authorList>
    </citation>
    <scope>NUCLEOTIDE SEQUENCE [LARGE SCALE GENOMIC DNA]</scope>
    <source>
        <strain>MIT 9303</strain>
    </source>
</reference>
<dbReference type="EC" id="4.1.1.37" evidence="1"/>
<dbReference type="EMBL" id="CP000554">
    <property type="protein sequence ID" value="ABM78578.1"/>
    <property type="molecule type" value="Genomic_DNA"/>
</dbReference>
<dbReference type="RefSeq" id="WP_011826463.1">
    <property type="nucleotide sequence ID" value="NC_008820.1"/>
</dbReference>
<dbReference type="SMR" id="A2CAR8"/>
<dbReference type="STRING" id="59922.P9303_18361"/>
<dbReference type="KEGG" id="pmf:P9303_18361"/>
<dbReference type="HOGENOM" id="CLU_040933_0_2_3"/>
<dbReference type="BioCyc" id="PMAR59922:G1G80-1591-MONOMER"/>
<dbReference type="UniPathway" id="UPA00251">
    <property type="reaction ID" value="UER00321"/>
</dbReference>
<dbReference type="Proteomes" id="UP000002274">
    <property type="component" value="Chromosome"/>
</dbReference>
<dbReference type="GO" id="GO:0005737">
    <property type="term" value="C:cytoplasm"/>
    <property type="evidence" value="ECO:0007669"/>
    <property type="project" value="UniProtKB-SubCell"/>
</dbReference>
<dbReference type="GO" id="GO:0004853">
    <property type="term" value="F:uroporphyrinogen decarboxylase activity"/>
    <property type="evidence" value="ECO:0007669"/>
    <property type="project" value="UniProtKB-UniRule"/>
</dbReference>
<dbReference type="GO" id="GO:0006782">
    <property type="term" value="P:protoporphyrinogen IX biosynthetic process"/>
    <property type="evidence" value="ECO:0007669"/>
    <property type="project" value="UniProtKB-UniRule"/>
</dbReference>
<dbReference type="CDD" id="cd00717">
    <property type="entry name" value="URO-D"/>
    <property type="match status" value="1"/>
</dbReference>
<dbReference type="FunFam" id="3.20.20.210:FF:000006">
    <property type="entry name" value="Uroporphyrinogen decarboxylase"/>
    <property type="match status" value="1"/>
</dbReference>
<dbReference type="Gene3D" id="3.20.20.210">
    <property type="match status" value="1"/>
</dbReference>
<dbReference type="HAMAP" id="MF_00218">
    <property type="entry name" value="URO_D"/>
    <property type="match status" value="1"/>
</dbReference>
<dbReference type="InterPro" id="IPR038071">
    <property type="entry name" value="UROD/MetE-like_sf"/>
</dbReference>
<dbReference type="InterPro" id="IPR006361">
    <property type="entry name" value="Uroporphyrinogen_deCO2ase_HemE"/>
</dbReference>
<dbReference type="InterPro" id="IPR000257">
    <property type="entry name" value="Uroporphyrinogen_deCOase"/>
</dbReference>
<dbReference type="NCBIfam" id="TIGR01464">
    <property type="entry name" value="hemE"/>
    <property type="match status" value="1"/>
</dbReference>
<dbReference type="PANTHER" id="PTHR21091">
    <property type="entry name" value="METHYLTETRAHYDROFOLATE:HOMOCYSTEINE METHYLTRANSFERASE RELATED"/>
    <property type="match status" value="1"/>
</dbReference>
<dbReference type="PANTHER" id="PTHR21091:SF169">
    <property type="entry name" value="UROPORPHYRINOGEN DECARBOXYLASE"/>
    <property type="match status" value="1"/>
</dbReference>
<dbReference type="Pfam" id="PF01208">
    <property type="entry name" value="URO-D"/>
    <property type="match status" value="1"/>
</dbReference>
<dbReference type="SUPFAM" id="SSF51726">
    <property type="entry name" value="UROD/MetE-like"/>
    <property type="match status" value="1"/>
</dbReference>
<dbReference type="PROSITE" id="PS00906">
    <property type="entry name" value="UROD_1"/>
    <property type="match status" value="1"/>
</dbReference>
<dbReference type="PROSITE" id="PS00907">
    <property type="entry name" value="UROD_2"/>
    <property type="match status" value="1"/>
</dbReference>
<organism>
    <name type="scientific">Prochlorococcus marinus (strain MIT 9303)</name>
    <dbReference type="NCBI Taxonomy" id="59922"/>
    <lineage>
        <taxon>Bacteria</taxon>
        <taxon>Bacillati</taxon>
        <taxon>Cyanobacteriota</taxon>
        <taxon>Cyanophyceae</taxon>
        <taxon>Synechococcales</taxon>
        <taxon>Prochlorococcaceae</taxon>
        <taxon>Prochlorococcus</taxon>
    </lineage>
</organism>
<accession>A2CAR8</accession>
<comment type="function">
    <text evidence="1">Catalyzes the decarboxylation of four acetate groups of uroporphyrinogen-III to yield coproporphyrinogen-III.</text>
</comment>
<comment type="catalytic activity">
    <reaction evidence="1">
        <text>uroporphyrinogen III + 4 H(+) = coproporphyrinogen III + 4 CO2</text>
        <dbReference type="Rhea" id="RHEA:19865"/>
        <dbReference type="ChEBI" id="CHEBI:15378"/>
        <dbReference type="ChEBI" id="CHEBI:16526"/>
        <dbReference type="ChEBI" id="CHEBI:57308"/>
        <dbReference type="ChEBI" id="CHEBI:57309"/>
        <dbReference type="EC" id="4.1.1.37"/>
    </reaction>
</comment>
<comment type="pathway">
    <text evidence="1">Porphyrin-containing compound metabolism; protoporphyrin-IX biosynthesis; coproporphyrinogen-III from 5-aminolevulinate: step 4/4.</text>
</comment>
<comment type="subunit">
    <text evidence="1">Homodimer.</text>
</comment>
<comment type="subcellular location">
    <subcellularLocation>
        <location evidence="1">Cytoplasm</location>
    </subcellularLocation>
</comment>
<comment type="similarity">
    <text evidence="1">Belongs to the uroporphyrinogen decarboxylase family.</text>
</comment>
<sequence>MSDSQPLLLRAARGESVERTPVWMMRQAGRYMKVYRDLRDRYPSFRERSENPDLSYQISMQPFEAFQPDGVILFSDILTPLPGMGIDFDIVESKGPLIQKPIRSLSQIEALQPLEPNATMPFVGEVLGRLRESVGNRAAVLGFVGAPWTLAAYVVEGKSSKNYAVIKAMAFQQPDLLHRLLNHFAESIATYLRYQIDSGAQVVQMFDSWAGQLSPADYDTFAAPYQKRVVDLVKSTHPDTPMILYISGSAGVLERMGRTGVDIISLDWTVDMADGCARLPEHLGVQGNVDPGLLFGTPEAIRERIVDAVRKARGRRHILNLGHGILPGTPEDNAKVFFETGKNVDNLIGSAA</sequence>
<name>DCUP_PROM3</name>
<evidence type="ECO:0000255" key="1">
    <source>
        <dbReference type="HAMAP-Rule" id="MF_00218"/>
    </source>
</evidence>
<gene>
    <name evidence="1" type="primary">hemE</name>
    <name type="ordered locus">P9303_18361</name>
</gene>
<feature type="chain" id="PRO_1000023938" description="Uroporphyrinogen decarboxylase">
    <location>
        <begin position="1"/>
        <end position="352"/>
    </location>
</feature>
<feature type="binding site" evidence="1">
    <location>
        <begin position="26"/>
        <end position="30"/>
    </location>
    <ligand>
        <name>substrate</name>
    </ligand>
</feature>
<feature type="binding site" evidence="1">
    <location>
        <position position="76"/>
    </location>
    <ligand>
        <name>substrate</name>
    </ligand>
</feature>
<feature type="binding site" evidence="1">
    <location>
        <position position="153"/>
    </location>
    <ligand>
        <name>substrate</name>
    </ligand>
</feature>
<feature type="binding site" evidence="1">
    <location>
        <position position="208"/>
    </location>
    <ligand>
        <name>substrate</name>
    </ligand>
</feature>
<feature type="binding site" evidence="1">
    <location>
        <position position="323"/>
    </location>
    <ligand>
        <name>substrate</name>
    </ligand>
</feature>
<feature type="site" description="Transition state stabilizer" evidence="1">
    <location>
        <position position="76"/>
    </location>
</feature>
<keyword id="KW-0963">Cytoplasm</keyword>
<keyword id="KW-0210">Decarboxylase</keyword>
<keyword id="KW-0456">Lyase</keyword>
<keyword id="KW-0627">Porphyrin biosynthesis</keyword>
<protein>
    <recommendedName>
        <fullName evidence="1">Uroporphyrinogen decarboxylase</fullName>
        <shortName evidence="1">UPD</shortName>
        <shortName evidence="1">URO-D</shortName>
        <ecNumber evidence="1">4.1.1.37</ecNumber>
    </recommendedName>
</protein>
<proteinExistence type="inferred from homology"/>